<name>DRT1_PHYSA</name>
<keyword id="KW-0027">Amidation</keyword>
<keyword id="KW-0878">Amphibian defense peptide</keyword>
<keyword id="KW-0044">Antibiotic</keyword>
<keyword id="KW-0929">Antimicrobial</keyword>
<keyword id="KW-0165">Cleavage on pair of basic residues</keyword>
<keyword id="KW-0903">Direct protein sequencing</keyword>
<keyword id="KW-0391">Immunity</keyword>
<keyword id="KW-0399">Innate immunity</keyword>
<keyword id="KW-0472">Membrane</keyword>
<keyword id="KW-0964">Secreted</keyword>
<keyword id="KW-0732">Signal</keyword>
<keyword id="KW-1052">Target cell membrane</keyword>
<keyword id="KW-1053">Target membrane</keyword>
<proteinExistence type="evidence at protein level"/>
<sequence length="77" mass="8361">MAFLKKSLFLILFLGLVPLSFCENDKREGENEEEQDDDQSEEKRALGTLLKGVGSAVATVGKMVADQFGKLLQAGQG</sequence>
<evidence type="ECO:0000250" key="1">
    <source>
        <dbReference type="UniProtKB" id="Q9PT75"/>
    </source>
</evidence>
<evidence type="ECO:0000255" key="2"/>
<evidence type="ECO:0000269" key="3">
    <source>
    </source>
</evidence>
<evidence type="ECO:0000303" key="4">
    <source>
    </source>
</evidence>
<evidence type="ECO:0000305" key="5"/>
<evidence type="ECO:0000305" key="6">
    <source>
    </source>
</evidence>
<reference key="1">
    <citation type="journal article" date="2005" name="Regul. Pept.">
        <title>Dermatoxin and phylloxin from the waxy monkey frog, Phyllomedusa sauvagei: cloning of precursor cDNAs and structural characterization from lyophilized skin secretion.</title>
        <authorList>
            <person name="Chen T."/>
            <person name="Walker B."/>
            <person name="Zhou M."/>
            <person name="Shaw C."/>
        </authorList>
    </citation>
    <scope>NUCLEOTIDE SEQUENCE [MRNA]</scope>
    <scope>PROTEIN SEQUENCE OF 45-76</scope>
    <scope>MASS SPECTROMETRY</scope>
    <scope>AMIDATION AT GLN-76</scope>
    <scope>SUBCELLULAR LOCATION</scope>
    <source>
        <tissue>Skin secretion</tissue>
    </source>
</reference>
<comment type="function">
    <text evidence="1">Antimicrobial peptide with potent activity against Gram-positive bacteria B.megaterium, C.glutamicum and S.aureus and mollicutes A.laidlawii and S.melliferum. Less active against Gram-negative bacteria B.cepacia, P.aeruginosa, S.typhimurium and S.meliloti. Probably acts by disturbing membrane functions with its amphipathic structure.</text>
</comment>
<comment type="subcellular location">
    <subcellularLocation>
        <location evidence="3">Secreted</location>
    </subcellularLocation>
    <subcellularLocation>
        <location evidence="5">Target cell membrane</location>
    </subcellularLocation>
</comment>
<comment type="tissue specificity">
    <text evidence="6">Expressed by the skin glands.</text>
</comment>
<comment type="mass spectrometry" mass="2945.96" method="MALDI" evidence="3"/>
<comment type="similarity">
    <text evidence="5">Belongs to the frog skin active peptide (FSAP) family. Dermatoxin subfamily.</text>
</comment>
<protein>
    <recommendedName>
        <fullName evidence="5">Dermatoxin-S1</fullName>
        <shortName evidence="5">DRT-S1</shortName>
    </recommendedName>
    <alternativeName>
        <fullName evidence="4">Dermatoxin</fullName>
    </alternativeName>
</protein>
<gene>
    <name evidence="4" type="primary">DRT-S</name>
</gene>
<accession>Q5DVA5</accession>
<feature type="signal peptide" evidence="2">
    <location>
        <begin position="1"/>
        <end position="22"/>
    </location>
</feature>
<feature type="propeptide" id="PRO_0000449668" evidence="6">
    <location>
        <begin position="23"/>
        <end position="44"/>
    </location>
</feature>
<feature type="peptide" id="PRO_5004254443" description="Dermatoxin-S1" evidence="3">
    <location>
        <begin position="45"/>
        <end position="76"/>
    </location>
</feature>
<feature type="modified residue" description="Glutamine amide" evidence="3">
    <location>
        <position position="76"/>
    </location>
</feature>
<dbReference type="EMBL" id="AJ865345">
    <property type="protein sequence ID" value="CAI26288.1"/>
    <property type="molecule type" value="mRNA"/>
</dbReference>
<dbReference type="GO" id="GO:0005576">
    <property type="term" value="C:extracellular region"/>
    <property type="evidence" value="ECO:0007669"/>
    <property type="project" value="UniProtKB-SubCell"/>
</dbReference>
<dbReference type="GO" id="GO:0016020">
    <property type="term" value="C:membrane"/>
    <property type="evidence" value="ECO:0007669"/>
    <property type="project" value="UniProtKB-KW"/>
</dbReference>
<dbReference type="GO" id="GO:0044218">
    <property type="term" value="C:other organism cell membrane"/>
    <property type="evidence" value="ECO:0007669"/>
    <property type="project" value="UniProtKB-KW"/>
</dbReference>
<dbReference type="GO" id="GO:0042742">
    <property type="term" value="P:defense response to bacterium"/>
    <property type="evidence" value="ECO:0007669"/>
    <property type="project" value="UniProtKB-KW"/>
</dbReference>
<dbReference type="GO" id="GO:0045087">
    <property type="term" value="P:innate immune response"/>
    <property type="evidence" value="ECO:0007669"/>
    <property type="project" value="UniProtKB-KW"/>
</dbReference>
<dbReference type="InterPro" id="IPR004275">
    <property type="entry name" value="Frog_antimicrobial_propeptide"/>
</dbReference>
<dbReference type="InterPro" id="IPR016322">
    <property type="entry name" value="FSAP"/>
</dbReference>
<dbReference type="Pfam" id="PF03032">
    <property type="entry name" value="FSAP_sig_propep"/>
    <property type="match status" value="1"/>
</dbReference>
<dbReference type="PIRSF" id="PIRSF001822">
    <property type="entry name" value="Dermaseptin_precursor"/>
    <property type="match status" value="1"/>
</dbReference>
<organism>
    <name type="scientific">Phyllomedusa sauvagei</name>
    <name type="common">Sauvage's leaf frog</name>
    <dbReference type="NCBI Taxonomy" id="8395"/>
    <lineage>
        <taxon>Eukaryota</taxon>
        <taxon>Metazoa</taxon>
        <taxon>Chordata</taxon>
        <taxon>Craniata</taxon>
        <taxon>Vertebrata</taxon>
        <taxon>Euteleostomi</taxon>
        <taxon>Amphibia</taxon>
        <taxon>Batrachia</taxon>
        <taxon>Anura</taxon>
        <taxon>Neobatrachia</taxon>
        <taxon>Hyloidea</taxon>
        <taxon>Hylidae</taxon>
        <taxon>Phyllomedusinae</taxon>
        <taxon>Phyllomedusa</taxon>
    </lineage>
</organism>